<protein>
    <recommendedName>
        <fullName>Tubulin beta-1 chain</fullName>
    </recommendedName>
    <alternativeName>
        <fullName>Beta-1-tubulin</fullName>
    </alternativeName>
</protein>
<reference key="1">
    <citation type="journal article" date="1993" name="Mol. Gen. Genet.">
        <title>A nucleotide substitution in one of the beta-tubulin genes of Trichoderma viride confers resistance to the antimitotic drug methyl benzimidazole-2-yl-carbamate.</title>
        <authorList>
            <person name="Goldman G.H."/>
            <person name="Temmerman W."/>
            <person name="Herrera-Estrella A."/>
            <person name="Jacobs D."/>
            <person name="Contreras R."/>
            <person name="van Montagu M."/>
        </authorList>
    </citation>
    <scope>NUCLEOTIDE SEQUENCE [GENOMIC DNA]</scope>
    <source>
        <strain>T9 BR47</strain>
    </source>
</reference>
<comment type="function">
    <text>Tubulin is the major constituent of microtubules, a cylinder consisting of laterally associated linear protofilaments composed of alpha- and beta-tubulin heterodimers. Microtubules grow by the addition of GTP-tubulin dimers to the microtubule end, where a stabilizing cap forms. Below the cap, tubulin dimers are in GDP-bound state, owing to GTPase activity of alpha-tubulin.</text>
</comment>
<comment type="cofactor">
    <cofactor evidence="1">
        <name>Mg(2+)</name>
        <dbReference type="ChEBI" id="CHEBI:18420"/>
    </cofactor>
</comment>
<comment type="subunit">
    <text>Dimer of alpha and beta chains. A typical microtubule is a hollow water-filled tube with an outer diameter of 25 nm and an inner diameter of 15 nM. Alpha-beta heterodimers associate head-to-tail to form protofilaments running lengthwise along the microtubule wall with the beta-tubulin subunit facing the microtubule plus end conferring a structural polarity. Microtubules usually have 13 protofilaments but different protofilament numbers can be found in some organisms and specialized cells.</text>
</comment>
<comment type="subcellular location">
    <subcellularLocation>
        <location>Cytoplasm</location>
        <location>Cytoskeleton</location>
    </subcellularLocation>
</comment>
<comment type="similarity">
    <text evidence="4">Belongs to the tubulin family.</text>
</comment>
<accession>P31864</accession>
<keyword id="KW-0963">Cytoplasm</keyword>
<keyword id="KW-0206">Cytoskeleton</keyword>
<keyword id="KW-0342">GTP-binding</keyword>
<keyword id="KW-0460">Magnesium</keyword>
<keyword id="KW-0479">Metal-binding</keyword>
<keyword id="KW-0493">Microtubule</keyword>
<keyword id="KW-0547">Nucleotide-binding</keyword>
<organism>
    <name type="scientific">Hypocrea rufa</name>
    <name type="common">Trichoderma viride</name>
    <dbReference type="NCBI Taxonomy" id="5547"/>
    <lineage>
        <taxon>Eukaryota</taxon>
        <taxon>Fungi</taxon>
        <taxon>Dikarya</taxon>
        <taxon>Ascomycota</taxon>
        <taxon>Pezizomycotina</taxon>
        <taxon>Sordariomycetes</taxon>
        <taxon>Hypocreomycetidae</taxon>
        <taxon>Hypocreales</taxon>
        <taxon>Hypocreaceae</taxon>
        <taxon>Trichoderma</taxon>
    </lineage>
</organism>
<proteinExistence type="inferred from homology"/>
<sequence>MREIVSVHLQTGQCGNQVGSAFWQTISGEHGLDSSGVYGGTSDQQLDRLNVYFNEASNNKYVPRAVLVDLEPGTMDAVRSGPFGQLFRPDNFVFGQSGAGNNWAKGHYTEGAELVDQVLDVVRREAENCECLQGFQITHSLGGGTGSGMGTLLISKIREEFPDRMMATFSVVPSPKVSDTVVEPYNATLSMHQLVENSDKTFCIDNEALYDICMRTLKLSNPSYGDLNHLVSAVMSGVSTSLRFPGQLNSDLRKLAVNMVPFPRLHFFMVGFAPLTSPGAHSFRAVTVPELTQQMMDPKNMMAASDFRNGRYLTCSTIFRGKVAMKEVEDQMRTVQNKNSAYFVEWIPNNIQTACALSPPRGLKISSTFVGNSTAIQEIFRRVGEQFSAMFRRQAFLHWYTSEGMDEMEFTEAESNMNDLVSEYQQYQDASADDGEEYEEDAPMEE</sequence>
<dbReference type="EMBL" id="Z15054">
    <property type="protein sequence ID" value="CAA78764.1"/>
    <property type="molecule type" value="Genomic_DNA"/>
</dbReference>
<dbReference type="PIR" id="S35191">
    <property type="entry name" value="S35191"/>
</dbReference>
<dbReference type="SMR" id="P31864"/>
<dbReference type="GO" id="GO:0005737">
    <property type="term" value="C:cytoplasm"/>
    <property type="evidence" value="ECO:0007669"/>
    <property type="project" value="UniProtKB-KW"/>
</dbReference>
<dbReference type="GO" id="GO:0005874">
    <property type="term" value="C:microtubule"/>
    <property type="evidence" value="ECO:0007669"/>
    <property type="project" value="UniProtKB-KW"/>
</dbReference>
<dbReference type="GO" id="GO:0005525">
    <property type="term" value="F:GTP binding"/>
    <property type="evidence" value="ECO:0007669"/>
    <property type="project" value="UniProtKB-KW"/>
</dbReference>
<dbReference type="GO" id="GO:0003924">
    <property type="term" value="F:GTPase activity"/>
    <property type="evidence" value="ECO:0007669"/>
    <property type="project" value="InterPro"/>
</dbReference>
<dbReference type="GO" id="GO:0046872">
    <property type="term" value="F:metal ion binding"/>
    <property type="evidence" value="ECO:0007669"/>
    <property type="project" value="UniProtKB-KW"/>
</dbReference>
<dbReference type="GO" id="GO:0005200">
    <property type="term" value="F:structural constituent of cytoskeleton"/>
    <property type="evidence" value="ECO:0007669"/>
    <property type="project" value="InterPro"/>
</dbReference>
<dbReference type="GO" id="GO:0007017">
    <property type="term" value="P:microtubule-based process"/>
    <property type="evidence" value="ECO:0007669"/>
    <property type="project" value="InterPro"/>
</dbReference>
<dbReference type="CDD" id="cd02187">
    <property type="entry name" value="beta_tubulin"/>
    <property type="match status" value="1"/>
</dbReference>
<dbReference type="FunFam" id="1.10.287.600:FF:000002">
    <property type="entry name" value="Tubulin beta chain"/>
    <property type="match status" value="1"/>
</dbReference>
<dbReference type="FunFam" id="3.30.1330.20:FF:000002">
    <property type="entry name" value="Tubulin beta chain"/>
    <property type="match status" value="1"/>
</dbReference>
<dbReference type="FunFam" id="3.40.50.1440:FF:000009">
    <property type="entry name" value="Tubulin beta chain"/>
    <property type="match status" value="1"/>
</dbReference>
<dbReference type="Gene3D" id="1.10.287.600">
    <property type="entry name" value="Helix hairpin bin"/>
    <property type="match status" value="1"/>
</dbReference>
<dbReference type="Gene3D" id="3.30.1330.20">
    <property type="entry name" value="Tubulin/FtsZ, C-terminal domain"/>
    <property type="match status" value="1"/>
</dbReference>
<dbReference type="Gene3D" id="3.40.50.1440">
    <property type="entry name" value="Tubulin/FtsZ, GTPase domain"/>
    <property type="match status" value="1"/>
</dbReference>
<dbReference type="InterPro" id="IPR013838">
    <property type="entry name" value="Beta-tubulin_BS"/>
</dbReference>
<dbReference type="InterPro" id="IPR002453">
    <property type="entry name" value="Beta_tubulin"/>
</dbReference>
<dbReference type="InterPro" id="IPR008280">
    <property type="entry name" value="Tub_FtsZ_C"/>
</dbReference>
<dbReference type="InterPro" id="IPR000217">
    <property type="entry name" value="Tubulin"/>
</dbReference>
<dbReference type="InterPro" id="IPR037103">
    <property type="entry name" value="Tubulin/FtsZ-like_C"/>
</dbReference>
<dbReference type="InterPro" id="IPR018316">
    <property type="entry name" value="Tubulin/FtsZ_2-layer-sand-dom"/>
</dbReference>
<dbReference type="InterPro" id="IPR036525">
    <property type="entry name" value="Tubulin/FtsZ_GTPase_sf"/>
</dbReference>
<dbReference type="InterPro" id="IPR023123">
    <property type="entry name" value="Tubulin_C"/>
</dbReference>
<dbReference type="InterPro" id="IPR017975">
    <property type="entry name" value="Tubulin_CS"/>
</dbReference>
<dbReference type="InterPro" id="IPR003008">
    <property type="entry name" value="Tubulin_FtsZ_GTPase"/>
</dbReference>
<dbReference type="PANTHER" id="PTHR11588">
    <property type="entry name" value="TUBULIN"/>
    <property type="match status" value="1"/>
</dbReference>
<dbReference type="Pfam" id="PF00091">
    <property type="entry name" value="Tubulin"/>
    <property type="match status" value="1"/>
</dbReference>
<dbReference type="Pfam" id="PF03953">
    <property type="entry name" value="Tubulin_C"/>
    <property type="match status" value="1"/>
</dbReference>
<dbReference type="PRINTS" id="PR01163">
    <property type="entry name" value="BETATUBULIN"/>
</dbReference>
<dbReference type="PRINTS" id="PR01161">
    <property type="entry name" value="TUBULIN"/>
</dbReference>
<dbReference type="SMART" id="SM00864">
    <property type="entry name" value="Tubulin"/>
    <property type="match status" value="1"/>
</dbReference>
<dbReference type="SMART" id="SM00865">
    <property type="entry name" value="Tubulin_C"/>
    <property type="match status" value="1"/>
</dbReference>
<dbReference type="SUPFAM" id="SSF55307">
    <property type="entry name" value="Tubulin C-terminal domain-like"/>
    <property type="match status" value="1"/>
</dbReference>
<dbReference type="SUPFAM" id="SSF52490">
    <property type="entry name" value="Tubulin nucleotide-binding domain-like"/>
    <property type="match status" value="1"/>
</dbReference>
<dbReference type="PROSITE" id="PS00227">
    <property type="entry name" value="TUBULIN"/>
    <property type="match status" value="1"/>
</dbReference>
<dbReference type="PROSITE" id="PS00228">
    <property type="entry name" value="TUBULIN_B_AUTOREG"/>
    <property type="match status" value="1"/>
</dbReference>
<name>TBB1_HYPRU</name>
<evidence type="ECO:0000250" key="1">
    <source>
        <dbReference type="UniProtKB" id="P68363"/>
    </source>
</evidence>
<evidence type="ECO:0000250" key="2">
    <source>
        <dbReference type="UniProtKB" id="Q13509"/>
    </source>
</evidence>
<evidence type="ECO:0000256" key="3">
    <source>
        <dbReference type="SAM" id="MobiDB-lite"/>
    </source>
</evidence>
<evidence type="ECO:0000305" key="4"/>
<gene>
    <name type="primary">tub1</name>
</gene>
<feature type="chain" id="PRO_0000048436" description="Tubulin beta-1 chain">
    <location>
        <begin position="1"/>
        <end position="446"/>
    </location>
</feature>
<feature type="region of interest" description="Disordered" evidence="3">
    <location>
        <begin position="421"/>
        <end position="446"/>
    </location>
</feature>
<feature type="compositionally biased region" description="Acidic residues" evidence="3">
    <location>
        <begin position="431"/>
        <end position="446"/>
    </location>
</feature>
<feature type="binding site" evidence="2">
    <location>
        <position position="13"/>
    </location>
    <ligand>
        <name>GTP</name>
        <dbReference type="ChEBI" id="CHEBI:37565"/>
    </ligand>
</feature>
<feature type="binding site" evidence="1">
    <location>
        <position position="71"/>
    </location>
    <ligand>
        <name>GTP</name>
        <dbReference type="ChEBI" id="CHEBI:37565"/>
    </ligand>
</feature>
<feature type="binding site" evidence="1">
    <location>
        <position position="71"/>
    </location>
    <ligand>
        <name>Mg(2+)</name>
        <dbReference type="ChEBI" id="CHEBI:18420"/>
    </ligand>
</feature>
<feature type="binding site" evidence="2">
    <location>
        <position position="140"/>
    </location>
    <ligand>
        <name>GTP</name>
        <dbReference type="ChEBI" id="CHEBI:37565"/>
    </ligand>
</feature>
<feature type="binding site" evidence="2">
    <location>
        <position position="144"/>
    </location>
    <ligand>
        <name>GTP</name>
        <dbReference type="ChEBI" id="CHEBI:37565"/>
    </ligand>
</feature>
<feature type="binding site" evidence="2">
    <location>
        <position position="145"/>
    </location>
    <ligand>
        <name>GTP</name>
        <dbReference type="ChEBI" id="CHEBI:37565"/>
    </ligand>
</feature>
<feature type="binding site" evidence="2">
    <location>
        <position position="146"/>
    </location>
    <ligand>
        <name>GTP</name>
        <dbReference type="ChEBI" id="CHEBI:37565"/>
    </ligand>
</feature>
<feature type="binding site" evidence="2">
    <location>
        <position position="206"/>
    </location>
    <ligand>
        <name>GTP</name>
        <dbReference type="ChEBI" id="CHEBI:37565"/>
    </ligand>
</feature>
<feature type="binding site" evidence="2">
    <location>
        <position position="228"/>
    </location>
    <ligand>
        <name>GTP</name>
        <dbReference type="ChEBI" id="CHEBI:37565"/>
    </ligand>
</feature>